<keyword id="KW-0119">Carbohydrate metabolism</keyword>
<keyword id="KW-0963">Cytoplasm</keyword>
<keyword id="KW-0413">Isomerase</keyword>
<keyword id="KW-0460">Magnesium</keyword>
<keyword id="KW-0479">Metal-binding</keyword>
<keyword id="KW-0859">Xylose metabolism</keyword>
<reference key="1">
    <citation type="journal article" date="2009" name="J. Bacteriol.">
        <title>Genomic sequencing reveals regulatory mutations and recombinational events in the widely used MC4100 lineage of Escherichia coli K-12.</title>
        <authorList>
            <person name="Ferenci T."/>
            <person name="Zhou Z."/>
            <person name="Betteridge T."/>
            <person name="Ren Y."/>
            <person name="Liu Y."/>
            <person name="Feng L."/>
            <person name="Reeves P.R."/>
            <person name="Wang L."/>
        </authorList>
    </citation>
    <scope>NUCLEOTIDE SEQUENCE [LARGE SCALE GENOMIC DNA]</scope>
    <source>
        <strain>K12 / MC4100 / BW2952</strain>
    </source>
</reference>
<feature type="chain" id="PRO_1000206265" description="Xylose isomerase">
    <location>
        <begin position="1"/>
        <end position="440"/>
    </location>
</feature>
<feature type="binding site" evidence="1">
    <location>
        <position position="307"/>
    </location>
    <ligand>
        <name>Mg(2+)</name>
        <dbReference type="ChEBI" id="CHEBI:18420"/>
        <label>2</label>
    </ligand>
</feature>
<feature type="binding site" evidence="1">
    <location>
        <position position="309"/>
    </location>
    <ligand>
        <name>Mg(2+)</name>
        <dbReference type="ChEBI" id="CHEBI:18420"/>
        <label>2</label>
    </ligand>
</feature>
<organism>
    <name type="scientific">Escherichia coli (strain K12 / MC4100 / BW2952)</name>
    <dbReference type="NCBI Taxonomy" id="595496"/>
    <lineage>
        <taxon>Bacteria</taxon>
        <taxon>Pseudomonadati</taxon>
        <taxon>Pseudomonadota</taxon>
        <taxon>Gammaproteobacteria</taxon>
        <taxon>Enterobacterales</taxon>
        <taxon>Enterobacteriaceae</taxon>
        <taxon>Escherichia</taxon>
    </lineage>
</organism>
<accession>C4ZXF6</accession>
<sequence>MQAYFDQLDRVRYEGSKSSNPLAFRHYNPDELVLGKRMEEHLRFAACYWHTFCWNGADMFGVGAFNRPWQQPGEALALAKRKADVAFEFFHKLHVPFYCFHDVDVSPEGASLKEYINNFAQMVDVLAGKQEESGVKLLWGTANCFTNPRYGAGAATNPDPEVFSWAATQVVTAMEATHKLGGENYVLWGGREGYETLLNTDLRQEREQLGRFMQMVVEHKHKIGFQGTLLIEPKPQEPTKHQYDYDAATVYGFLKQFGLEKEIKLNIEANHATLAGHSFHHEIATAIALGLFGSVDANRGDAQLGWDTDQFPNSVEENALVMYEILKAGGFTTGGLNFDAKVRRQSTDKYDLFYGHIGAMDTMALALKIAARMIEDGELDKRIAQRYSGWNSELGQQILKGQMSLADLAKYAQEHHLSPVHQSGRQEQLENLVNHYLFDK</sequence>
<proteinExistence type="inferred from homology"/>
<comment type="catalytic activity">
    <reaction evidence="1">
        <text>alpha-D-xylose = alpha-D-xylulofuranose</text>
        <dbReference type="Rhea" id="RHEA:22816"/>
        <dbReference type="ChEBI" id="CHEBI:28518"/>
        <dbReference type="ChEBI" id="CHEBI:188998"/>
        <dbReference type="EC" id="5.3.1.5"/>
    </reaction>
</comment>
<comment type="cofactor">
    <cofactor evidence="1">
        <name>Mg(2+)</name>
        <dbReference type="ChEBI" id="CHEBI:18420"/>
    </cofactor>
    <text evidence="1">Binds 2 magnesium ions per subunit.</text>
</comment>
<comment type="subunit">
    <text evidence="1">Homotetramer.</text>
</comment>
<comment type="subcellular location">
    <subcellularLocation>
        <location evidence="1">Cytoplasm</location>
    </subcellularLocation>
</comment>
<comment type="similarity">
    <text evidence="1">Belongs to the xylose isomerase family.</text>
</comment>
<name>XYLA_ECOBW</name>
<gene>
    <name evidence="1" type="primary">xylA</name>
    <name type="ordered locus">BWG_3255</name>
</gene>
<protein>
    <recommendedName>
        <fullName evidence="1">Xylose isomerase</fullName>
        <ecNumber evidence="1">5.3.1.5</ecNumber>
    </recommendedName>
</protein>
<dbReference type="EC" id="5.3.1.5" evidence="1"/>
<dbReference type="EMBL" id="CP001396">
    <property type="protein sequence ID" value="ACR63016.1"/>
    <property type="molecule type" value="Genomic_DNA"/>
</dbReference>
<dbReference type="RefSeq" id="WP_001149591.1">
    <property type="nucleotide sequence ID" value="NC_012759.1"/>
</dbReference>
<dbReference type="SMR" id="C4ZXF6"/>
<dbReference type="KEGG" id="ebw:BWG_3255"/>
<dbReference type="HOGENOM" id="CLU_037261_1_0_6"/>
<dbReference type="GO" id="GO:0005737">
    <property type="term" value="C:cytoplasm"/>
    <property type="evidence" value="ECO:0007669"/>
    <property type="project" value="UniProtKB-SubCell"/>
</dbReference>
<dbReference type="GO" id="GO:0000287">
    <property type="term" value="F:magnesium ion binding"/>
    <property type="evidence" value="ECO:0007669"/>
    <property type="project" value="UniProtKB-UniRule"/>
</dbReference>
<dbReference type="GO" id="GO:0009045">
    <property type="term" value="F:xylose isomerase activity"/>
    <property type="evidence" value="ECO:0007669"/>
    <property type="project" value="UniProtKB-UniRule"/>
</dbReference>
<dbReference type="GO" id="GO:0042732">
    <property type="term" value="P:D-xylose metabolic process"/>
    <property type="evidence" value="ECO:0007669"/>
    <property type="project" value="UniProtKB-UniRule"/>
</dbReference>
<dbReference type="FunFam" id="3.20.20.150:FF:000002">
    <property type="entry name" value="Xylose isomerase"/>
    <property type="match status" value="1"/>
</dbReference>
<dbReference type="Gene3D" id="3.20.20.150">
    <property type="entry name" value="Divalent-metal-dependent TIM barrel enzymes"/>
    <property type="match status" value="1"/>
</dbReference>
<dbReference type="HAMAP" id="MF_00455">
    <property type="entry name" value="Xylose_isom_A"/>
    <property type="match status" value="1"/>
</dbReference>
<dbReference type="InterPro" id="IPR036237">
    <property type="entry name" value="Xyl_isomerase-like_sf"/>
</dbReference>
<dbReference type="InterPro" id="IPR013452">
    <property type="entry name" value="Xylose_isom_bac"/>
</dbReference>
<dbReference type="InterPro" id="IPR001998">
    <property type="entry name" value="Xylose_isomerase"/>
</dbReference>
<dbReference type="NCBIfam" id="NF003998">
    <property type="entry name" value="PRK05474.1"/>
    <property type="match status" value="1"/>
</dbReference>
<dbReference type="NCBIfam" id="TIGR02630">
    <property type="entry name" value="xylose_isom_A"/>
    <property type="match status" value="1"/>
</dbReference>
<dbReference type="PANTHER" id="PTHR48408">
    <property type="match status" value="1"/>
</dbReference>
<dbReference type="PANTHER" id="PTHR48408:SF1">
    <property type="entry name" value="XYLOSE ISOMERASE"/>
    <property type="match status" value="1"/>
</dbReference>
<dbReference type="PRINTS" id="PR00688">
    <property type="entry name" value="XYLOSISMRASE"/>
</dbReference>
<dbReference type="SUPFAM" id="SSF51658">
    <property type="entry name" value="Xylose isomerase-like"/>
    <property type="match status" value="1"/>
</dbReference>
<dbReference type="PROSITE" id="PS51415">
    <property type="entry name" value="XYLOSE_ISOMERASE"/>
    <property type="match status" value="1"/>
</dbReference>
<evidence type="ECO:0000255" key="1">
    <source>
        <dbReference type="HAMAP-Rule" id="MF_00455"/>
    </source>
</evidence>